<reference key="1">
    <citation type="submission" date="2007-06" db="EMBL/GenBank/DDBJ databases">
        <title>Complete sequence of Clostridium beijerinckii NCIMB 8052.</title>
        <authorList>
            <consortium name="US DOE Joint Genome Institute"/>
            <person name="Copeland A."/>
            <person name="Lucas S."/>
            <person name="Lapidus A."/>
            <person name="Barry K."/>
            <person name="Detter J.C."/>
            <person name="Glavina del Rio T."/>
            <person name="Hammon N."/>
            <person name="Israni S."/>
            <person name="Dalin E."/>
            <person name="Tice H."/>
            <person name="Pitluck S."/>
            <person name="Sims D."/>
            <person name="Brettin T."/>
            <person name="Bruce D."/>
            <person name="Tapia R."/>
            <person name="Brainard J."/>
            <person name="Schmutz J."/>
            <person name="Larimer F."/>
            <person name="Land M."/>
            <person name="Hauser L."/>
            <person name="Kyrpides N."/>
            <person name="Mikhailova N."/>
            <person name="Bennet G."/>
            <person name="Cann I."/>
            <person name="Chen J.-S."/>
            <person name="Contreras A.L."/>
            <person name="Jones D."/>
            <person name="Kashket E."/>
            <person name="Mitchell W."/>
            <person name="Stoddard S."/>
            <person name="Schwarz W."/>
            <person name="Qureshi N."/>
            <person name="Young M."/>
            <person name="Shi Z."/>
            <person name="Ezeji T."/>
            <person name="White B."/>
            <person name="Blaschek H."/>
            <person name="Richardson P."/>
        </authorList>
    </citation>
    <scope>NUCLEOTIDE SEQUENCE [LARGE SCALE GENOMIC DNA]</scope>
    <source>
        <strain>ATCC 51743 / NCIMB 8052</strain>
    </source>
</reference>
<sequence>MKRINILNEDTANKIAAGEVVERPASVVKELIENSIDANAKNIIIEIEEGGISLIRIIDDGDGIYKDDIAKAFLPHATSKIQESEDIYNIHTLGFRGEALPSIASVGKVNLKSKQDEEAFGYEISIEGGKASEVTECGINKGTILEVQDLFFNVPARKKFLKSVSKESSLINDIVTRLSLANPKISFKLYNNHKKVLHTFGNGDLKDVIRTIYGKSITDNILYFSDSSDLITVYGYVGTEEIARGSRNNQSIFVNRRYIKNRALAIAVEQAFKSFSTVNKFPFFILFIEVYPEYVDVNIHPTKAEIKFNDERMIFKKIFGAVHTALKNEVFETFAIKEEENTKKEPLPTFEEITFKIKEEEEKVKFASSAAKTLISQGKDLKANNESSFKSVYDPSLNNINKTIVEESTDYNKENEEPISIPVDLKPNSYIENLVDDYSDNAEDEIKSNSEPIENVITENKYENIKPNPIAKFPPITIIGQYNKTYILGEYDGTLYMIDQHAAHEKILFEKYLKEIEEGTIIIQPLIVPSIIDLSIDDYSYFEENKDIFREAGFLLEEFGGSSLSLKEVPYFLGRLNPKNLFLDILDNLKNLGNGKTSEVKHNAIATKACKAAIKGNDKLEMNEMIKLIEDLRYIDDPFHCPHGRPVIIKFTSIDIDKKFKRII</sequence>
<proteinExistence type="inferred from homology"/>
<comment type="function">
    <text evidence="1">This protein is involved in the repair of mismatches in DNA. It is required for dam-dependent methyl-directed DNA mismatch repair. May act as a 'molecular matchmaker', a protein that promotes the formation of a stable complex between two or more DNA-binding proteins in an ATP-dependent manner without itself being part of a final effector complex.</text>
</comment>
<comment type="similarity">
    <text evidence="1">Belongs to the DNA mismatch repair MutL/HexB family.</text>
</comment>
<accession>A6LWJ1</accession>
<dbReference type="EMBL" id="CP000721">
    <property type="protein sequence ID" value="ABR34721.1"/>
    <property type="molecule type" value="Genomic_DNA"/>
</dbReference>
<dbReference type="RefSeq" id="WP_012058776.1">
    <property type="nucleotide sequence ID" value="NC_009617.1"/>
</dbReference>
<dbReference type="SMR" id="A6LWJ1"/>
<dbReference type="KEGG" id="cbe:Cbei_2565"/>
<dbReference type="eggNOG" id="COG0323">
    <property type="taxonomic scope" value="Bacteria"/>
</dbReference>
<dbReference type="HOGENOM" id="CLU_004131_4_1_9"/>
<dbReference type="Proteomes" id="UP000000565">
    <property type="component" value="Chromosome"/>
</dbReference>
<dbReference type="GO" id="GO:0032300">
    <property type="term" value="C:mismatch repair complex"/>
    <property type="evidence" value="ECO:0007669"/>
    <property type="project" value="InterPro"/>
</dbReference>
<dbReference type="GO" id="GO:0005524">
    <property type="term" value="F:ATP binding"/>
    <property type="evidence" value="ECO:0007669"/>
    <property type="project" value="InterPro"/>
</dbReference>
<dbReference type="GO" id="GO:0016887">
    <property type="term" value="F:ATP hydrolysis activity"/>
    <property type="evidence" value="ECO:0007669"/>
    <property type="project" value="InterPro"/>
</dbReference>
<dbReference type="GO" id="GO:0140664">
    <property type="term" value="F:ATP-dependent DNA damage sensor activity"/>
    <property type="evidence" value="ECO:0007669"/>
    <property type="project" value="InterPro"/>
</dbReference>
<dbReference type="GO" id="GO:0030983">
    <property type="term" value="F:mismatched DNA binding"/>
    <property type="evidence" value="ECO:0007669"/>
    <property type="project" value="InterPro"/>
</dbReference>
<dbReference type="GO" id="GO:0006298">
    <property type="term" value="P:mismatch repair"/>
    <property type="evidence" value="ECO:0007669"/>
    <property type="project" value="UniProtKB-UniRule"/>
</dbReference>
<dbReference type="CDD" id="cd16926">
    <property type="entry name" value="HATPase_MutL-MLH-PMS-like"/>
    <property type="match status" value="1"/>
</dbReference>
<dbReference type="CDD" id="cd00782">
    <property type="entry name" value="MutL_Trans"/>
    <property type="match status" value="1"/>
</dbReference>
<dbReference type="FunFam" id="3.30.565.10:FF:000003">
    <property type="entry name" value="DNA mismatch repair endonuclease MutL"/>
    <property type="match status" value="1"/>
</dbReference>
<dbReference type="Gene3D" id="3.30.230.10">
    <property type="match status" value="1"/>
</dbReference>
<dbReference type="Gene3D" id="3.30.565.10">
    <property type="entry name" value="Histidine kinase-like ATPase, C-terminal domain"/>
    <property type="match status" value="1"/>
</dbReference>
<dbReference type="Gene3D" id="3.30.1540.20">
    <property type="entry name" value="MutL, C-terminal domain, dimerisation subdomain"/>
    <property type="match status" value="1"/>
</dbReference>
<dbReference type="Gene3D" id="3.30.1370.100">
    <property type="entry name" value="MutL, C-terminal domain, regulatory subdomain"/>
    <property type="match status" value="1"/>
</dbReference>
<dbReference type="HAMAP" id="MF_00149">
    <property type="entry name" value="DNA_mis_repair"/>
    <property type="match status" value="1"/>
</dbReference>
<dbReference type="InterPro" id="IPR014762">
    <property type="entry name" value="DNA_mismatch_repair_CS"/>
</dbReference>
<dbReference type="InterPro" id="IPR020667">
    <property type="entry name" value="DNA_mismatch_repair_MutL"/>
</dbReference>
<dbReference type="InterPro" id="IPR013507">
    <property type="entry name" value="DNA_mismatch_S5_2-like"/>
</dbReference>
<dbReference type="InterPro" id="IPR036890">
    <property type="entry name" value="HATPase_C_sf"/>
</dbReference>
<dbReference type="InterPro" id="IPR002099">
    <property type="entry name" value="MutL/Mlh/PMS"/>
</dbReference>
<dbReference type="InterPro" id="IPR038973">
    <property type="entry name" value="MutL/Mlh/Pms-like"/>
</dbReference>
<dbReference type="InterPro" id="IPR014790">
    <property type="entry name" value="MutL_C"/>
</dbReference>
<dbReference type="InterPro" id="IPR042120">
    <property type="entry name" value="MutL_C_dimsub"/>
</dbReference>
<dbReference type="InterPro" id="IPR042121">
    <property type="entry name" value="MutL_C_regsub"/>
</dbReference>
<dbReference type="InterPro" id="IPR037198">
    <property type="entry name" value="MutL_C_sf"/>
</dbReference>
<dbReference type="InterPro" id="IPR020568">
    <property type="entry name" value="Ribosomal_Su5_D2-typ_SF"/>
</dbReference>
<dbReference type="InterPro" id="IPR014721">
    <property type="entry name" value="Ribsml_uS5_D2-typ_fold_subgr"/>
</dbReference>
<dbReference type="NCBIfam" id="TIGR00585">
    <property type="entry name" value="mutl"/>
    <property type="match status" value="1"/>
</dbReference>
<dbReference type="PANTHER" id="PTHR10073">
    <property type="entry name" value="DNA MISMATCH REPAIR PROTEIN MLH, PMS, MUTL"/>
    <property type="match status" value="1"/>
</dbReference>
<dbReference type="PANTHER" id="PTHR10073:SF12">
    <property type="entry name" value="DNA MISMATCH REPAIR PROTEIN MLH1"/>
    <property type="match status" value="1"/>
</dbReference>
<dbReference type="Pfam" id="PF01119">
    <property type="entry name" value="DNA_mis_repair"/>
    <property type="match status" value="1"/>
</dbReference>
<dbReference type="Pfam" id="PF13589">
    <property type="entry name" value="HATPase_c_3"/>
    <property type="match status" value="1"/>
</dbReference>
<dbReference type="Pfam" id="PF08676">
    <property type="entry name" value="MutL_C"/>
    <property type="match status" value="1"/>
</dbReference>
<dbReference type="SMART" id="SM01340">
    <property type="entry name" value="DNA_mis_repair"/>
    <property type="match status" value="1"/>
</dbReference>
<dbReference type="SMART" id="SM00853">
    <property type="entry name" value="MutL_C"/>
    <property type="match status" value="1"/>
</dbReference>
<dbReference type="SUPFAM" id="SSF55874">
    <property type="entry name" value="ATPase domain of HSP90 chaperone/DNA topoisomerase II/histidine kinase"/>
    <property type="match status" value="1"/>
</dbReference>
<dbReference type="SUPFAM" id="SSF118116">
    <property type="entry name" value="DNA mismatch repair protein MutL"/>
    <property type="match status" value="1"/>
</dbReference>
<dbReference type="SUPFAM" id="SSF54211">
    <property type="entry name" value="Ribosomal protein S5 domain 2-like"/>
    <property type="match status" value="1"/>
</dbReference>
<dbReference type="PROSITE" id="PS00058">
    <property type="entry name" value="DNA_MISMATCH_REPAIR_1"/>
    <property type="match status" value="1"/>
</dbReference>
<feature type="chain" id="PRO_1000076693" description="DNA mismatch repair protein MutL">
    <location>
        <begin position="1"/>
        <end position="664"/>
    </location>
</feature>
<protein>
    <recommendedName>
        <fullName evidence="1">DNA mismatch repair protein MutL</fullName>
    </recommendedName>
</protein>
<organism>
    <name type="scientific">Clostridium beijerinckii (strain ATCC 51743 / NCIMB 8052)</name>
    <name type="common">Clostridium acetobutylicum</name>
    <dbReference type="NCBI Taxonomy" id="290402"/>
    <lineage>
        <taxon>Bacteria</taxon>
        <taxon>Bacillati</taxon>
        <taxon>Bacillota</taxon>
        <taxon>Clostridia</taxon>
        <taxon>Eubacteriales</taxon>
        <taxon>Clostridiaceae</taxon>
        <taxon>Clostridium</taxon>
    </lineage>
</organism>
<gene>
    <name evidence="1" type="primary">mutL</name>
    <name type="ordered locus">Cbei_2565</name>
</gene>
<evidence type="ECO:0000255" key="1">
    <source>
        <dbReference type="HAMAP-Rule" id="MF_00149"/>
    </source>
</evidence>
<keyword id="KW-0227">DNA damage</keyword>
<keyword id="KW-0234">DNA repair</keyword>
<name>MUTL_CLOB8</name>